<gene>
    <name type="primary">orfX3</name>
    <name evidence="6" type="ordered locus">CLM_0891</name>
</gene>
<protein>
    <recommendedName>
        <fullName evidence="4">Protein OrfX3</fullName>
    </recommendedName>
</protein>
<keyword id="KW-0843">Virulence</keyword>
<comment type="function">
    <text evidence="5">Part of a botulinum neurotoxin type A2 (BoNT) locus; may be part of a progenitor toxin complex required to protect BoNT during its passage through the host gastrointestinal tract.</text>
</comment>
<comment type="subunit">
    <text evidence="3">Part of a crude toxin extract that includes BoNTA2/NTNH, P47, OrfX2 and OrfX3; OrfX1 was not detected.</text>
</comment>
<comment type="induction">
    <text evidence="2 3">The toxin locus has divergently transcribed operons maximally expressed during early stationary phase. This is part of the orfX1-orfX2-orfX3 operon. A longer botR-orfX1-orfX2-orfX3 operon is also transcribed at lower levels (PubMed:15158256). The crude toxin extract was isolated from cells that had been growing statically for 96 hours (at protein level) (PubMed:19915042).</text>
</comment>
<comment type="domain">
    <text evidence="5">May include a tubular lipid-binding (TULIP) domain (residues 2-258).</text>
</comment>
<comment type="PTM">
    <text evidence="3">Shorter forms of this protein are seen in vivo.</text>
</comment>
<comment type="similarity">
    <text evidence="5">Belongs to the TULIP P47 family.</text>
</comment>
<comment type="caution">
    <text evidence="1 5">Was originally thought to be a membrane protein. Crystallography of an ortholog in complex with OrfX1 shows this is not the case (By similarity).</text>
</comment>
<reference evidence="6" key="1">
    <citation type="submission" date="2008-10" db="EMBL/GenBank/DDBJ databases">
        <title>Genome sequence of Clostridium botulinum A2 Kyoto.</title>
        <authorList>
            <person name="Shrivastava S."/>
            <person name="Brinkac L.M."/>
            <person name="Brown J.L."/>
            <person name="Bruce D."/>
            <person name="Detter C.C."/>
            <person name="Johnson E.A."/>
            <person name="Munk C.A."/>
            <person name="Smith L.A."/>
            <person name="Smith T.J."/>
            <person name="Sutton G."/>
            <person name="Brettin T.S."/>
        </authorList>
    </citation>
    <scope>NUCLEOTIDE SEQUENCE [LARGE SCALE GENOMIC DNA]</scope>
    <source>
        <strain>Kyoto / Type A2</strain>
    </source>
</reference>
<reference key="2">
    <citation type="journal article" date="2004" name="FEMS Microbiol. Lett.">
        <title>Nucleotide sequence and transcriptional analysis of the type A2 neurotoxin gene cluster in Clostridium botulinum.</title>
        <authorList>
            <person name="Dineen S.S."/>
            <person name="Bradshaw M."/>
            <person name="Karasek C.E."/>
            <person name="Johnson E.A."/>
        </authorList>
    </citation>
    <scope>INDUCTION</scope>
    <scope>OPERON STRUCTURE</scope>
    <source>
        <strain>Kyoto / Type A2</strain>
    </source>
</reference>
<reference key="3">
    <citation type="journal article" date="2010" name="Appl. Environ. Microbiol.">
        <title>Expression of the Clostridium botulinum A2 neurotoxin gene cluster proteins and characterization of the A2 complex.</title>
        <authorList>
            <person name="Lin G."/>
            <person name="Tepp W.H."/>
            <person name="Pier C.L."/>
            <person name="Jacobson M.J."/>
            <person name="Johnson E.A."/>
        </authorList>
    </citation>
    <scope>SUBUNIT</scope>
    <scope>INDUCTION</scope>
    <source>
        <strain>Kyoto / Type A2</strain>
    </source>
</reference>
<reference key="4">
    <citation type="journal article" date="2017" name="FEBS Lett.">
        <title>Crystal structures of OrfX2 and P47 from a Botulinum neurotoxin OrfX-type gene cluster.</title>
        <authorList>
            <person name="Gustafsson R."/>
            <person name="Berntsson R.P."/>
            <person name="Martinez-Carranza M."/>
            <person name="El Tekle G."/>
            <person name="Odegrip R."/>
            <person name="Johnson E.A."/>
            <person name="Stenmark P."/>
        </authorList>
    </citation>
    <scope>POSSIBLE FUNCTION</scope>
    <scope>SUBCELLULAR LOCATION</scope>
    <scope>DOMAIN</scope>
    <source>
        <strain>Kyoto / Type A2</strain>
    </source>
</reference>
<dbReference type="EMBL" id="CP001581">
    <property type="protein sequence ID" value="ACO87274.1"/>
    <property type="molecule type" value="Genomic_DNA"/>
</dbReference>
<dbReference type="RefSeq" id="WP_012705769.1">
    <property type="nucleotide sequence ID" value="NC_012563.1"/>
</dbReference>
<dbReference type="SMR" id="C1FUH3"/>
<dbReference type="KEGG" id="cby:CLM_0891"/>
<dbReference type="eggNOG" id="ENOG50316NY">
    <property type="taxonomic scope" value="Bacteria"/>
</dbReference>
<dbReference type="HOGENOM" id="CLU_032638_0_0_9"/>
<dbReference type="Proteomes" id="UP000001374">
    <property type="component" value="Chromosome"/>
</dbReference>
<dbReference type="InterPro" id="IPR010567">
    <property type="entry name" value="Clostridium_P47"/>
</dbReference>
<dbReference type="Pfam" id="PF06597">
    <property type="entry name" value="Clostridium_P47"/>
    <property type="match status" value="1"/>
</dbReference>
<name>ORFX3_CLOBJ</name>
<sequence length="490" mass="55174">MQTTTLNWDTVYAVPIDIVNEAIKFKHPTPEQFELLDGKYGDCKGSFQEWQIISGGDGGNIRLKIPIKNFKANVIGKYLSGTGGFESANLEIQVKLKYLPHFPKSKNKNEELVDLKIRTKSNNAEDPAIIIIPTSEDVKGFYFNEDVRSLLMTEDDQFIMNYFHRLIKEWLERNLYFFNYVFNTVNLNLYISNNEKWKWTKPSYVDYAYSEIDEDLSKSILGVLCMTDGRKGSKNQQQKIDPNAIPKTSQSGFLISEDRLLKNILLPTIPKKFPKSKGDEFEVVNQSAQGGTYSYILKLKEGKKINLDNINACGYTCTPYIQEMKVSLLGNYLRLESTTRVDLPLGVSSICETMCEYRFKLDKNDKGEQTIAYEQIGSPTNKQYTEKTQDVSFEIIKGLLIATLGFVLELVPGIGSFLAVALIGGTLVGSISLIPNFIENYNVNTAPSIDLSLENSVSEITWNSSDIFNLNYVALAGPLQLGGTLQVQNT</sequence>
<proteinExistence type="evidence at protein level"/>
<evidence type="ECO:0000250" key="1">
    <source>
        <dbReference type="UniProtKB" id="A0A5P3XKL3"/>
    </source>
</evidence>
<evidence type="ECO:0000269" key="2">
    <source>
    </source>
</evidence>
<evidence type="ECO:0000269" key="3">
    <source>
    </source>
</evidence>
<evidence type="ECO:0000303" key="4">
    <source>
    </source>
</evidence>
<evidence type="ECO:0000305" key="5">
    <source>
    </source>
</evidence>
<evidence type="ECO:0000312" key="6">
    <source>
        <dbReference type="EMBL" id="ACO87274.1"/>
    </source>
</evidence>
<accession>C1FUH3</accession>
<organism>
    <name type="scientific">Clostridium botulinum (strain Kyoto / Type A2)</name>
    <dbReference type="NCBI Taxonomy" id="536232"/>
    <lineage>
        <taxon>Bacteria</taxon>
        <taxon>Bacillati</taxon>
        <taxon>Bacillota</taxon>
        <taxon>Clostridia</taxon>
        <taxon>Eubacteriales</taxon>
        <taxon>Clostridiaceae</taxon>
        <taxon>Clostridium</taxon>
    </lineage>
</organism>
<feature type="chain" id="PRO_0000457888" description="Protein OrfX3">
    <location>
        <begin position="1"/>
        <end position="490"/>
    </location>
</feature>